<name>RL29_ACIBS</name>
<comment type="similarity">
    <text evidence="1">Belongs to the universal ribosomal protein uL29 family.</text>
</comment>
<reference key="1">
    <citation type="journal article" date="2008" name="PLoS ONE">
        <title>Comparative analysis of Acinetobacters: three genomes for three lifestyles.</title>
        <authorList>
            <person name="Vallenet D."/>
            <person name="Nordmann P."/>
            <person name="Barbe V."/>
            <person name="Poirel L."/>
            <person name="Mangenot S."/>
            <person name="Bataille E."/>
            <person name="Dossat C."/>
            <person name="Gas S."/>
            <person name="Kreimeyer A."/>
            <person name="Lenoble P."/>
            <person name="Oztas S."/>
            <person name="Poulain J."/>
            <person name="Segurens B."/>
            <person name="Robert C."/>
            <person name="Abergel C."/>
            <person name="Claverie J.-M."/>
            <person name="Raoult D."/>
            <person name="Medigue C."/>
            <person name="Weissenbach J."/>
            <person name="Cruveiller S."/>
        </authorList>
    </citation>
    <scope>NUCLEOTIDE SEQUENCE [LARGE SCALE GENOMIC DNA]</scope>
    <source>
        <strain>SDF</strain>
    </source>
</reference>
<accession>B0VQS6</accession>
<gene>
    <name evidence="1" type="primary">rpmC</name>
    <name type="ordered locus">ABSDF0431</name>
</gene>
<keyword id="KW-0687">Ribonucleoprotein</keyword>
<keyword id="KW-0689">Ribosomal protein</keyword>
<proteinExistence type="inferred from homology"/>
<dbReference type="EMBL" id="CU468230">
    <property type="protein sequence ID" value="CAO99822.1"/>
    <property type="molecule type" value="Genomic_DNA"/>
</dbReference>
<dbReference type="SMR" id="B0VQS6"/>
<dbReference type="KEGG" id="abm:ABSDF0431"/>
<dbReference type="HOGENOM" id="CLU_158491_1_2_6"/>
<dbReference type="Proteomes" id="UP000001741">
    <property type="component" value="Chromosome"/>
</dbReference>
<dbReference type="GO" id="GO:0022625">
    <property type="term" value="C:cytosolic large ribosomal subunit"/>
    <property type="evidence" value="ECO:0007669"/>
    <property type="project" value="TreeGrafter"/>
</dbReference>
<dbReference type="GO" id="GO:0003735">
    <property type="term" value="F:structural constituent of ribosome"/>
    <property type="evidence" value="ECO:0007669"/>
    <property type="project" value="InterPro"/>
</dbReference>
<dbReference type="GO" id="GO:0006412">
    <property type="term" value="P:translation"/>
    <property type="evidence" value="ECO:0007669"/>
    <property type="project" value="UniProtKB-UniRule"/>
</dbReference>
<dbReference type="CDD" id="cd00427">
    <property type="entry name" value="Ribosomal_L29_HIP"/>
    <property type="match status" value="1"/>
</dbReference>
<dbReference type="FunFam" id="1.10.287.310:FF:000001">
    <property type="entry name" value="50S ribosomal protein L29"/>
    <property type="match status" value="1"/>
</dbReference>
<dbReference type="Gene3D" id="1.10.287.310">
    <property type="match status" value="1"/>
</dbReference>
<dbReference type="HAMAP" id="MF_00374">
    <property type="entry name" value="Ribosomal_uL29"/>
    <property type="match status" value="1"/>
</dbReference>
<dbReference type="InterPro" id="IPR050063">
    <property type="entry name" value="Ribosomal_protein_uL29"/>
</dbReference>
<dbReference type="InterPro" id="IPR001854">
    <property type="entry name" value="Ribosomal_uL29"/>
</dbReference>
<dbReference type="InterPro" id="IPR036049">
    <property type="entry name" value="Ribosomal_uL29_sf"/>
</dbReference>
<dbReference type="NCBIfam" id="TIGR00012">
    <property type="entry name" value="L29"/>
    <property type="match status" value="1"/>
</dbReference>
<dbReference type="PANTHER" id="PTHR10916">
    <property type="entry name" value="60S RIBOSOMAL PROTEIN L35/50S RIBOSOMAL PROTEIN L29"/>
    <property type="match status" value="1"/>
</dbReference>
<dbReference type="PANTHER" id="PTHR10916:SF0">
    <property type="entry name" value="LARGE RIBOSOMAL SUBUNIT PROTEIN UL29C"/>
    <property type="match status" value="1"/>
</dbReference>
<dbReference type="Pfam" id="PF00831">
    <property type="entry name" value="Ribosomal_L29"/>
    <property type="match status" value="1"/>
</dbReference>
<dbReference type="SUPFAM" id="SSF46561">
    <property type="entry name" value="Ribosomal protein L29 (L29p)"/>
    <property type="match status" value="1"/>
</dbReference>
<evidence type="ECO:0000255" key="1">
    <source>
        <dbReference type="HAMAP-Rule" id="MF_00374"/>
    </source>
</evidence>
<evidence type="ECO:0000305" key="2"/>
<protein>
    <recommendedName>
        <fullName evidence="1">Large ribosomal subunit protein uL29</fullName>
    </recommendedName>
    <alternativeName>
        <fullName evidence="2">50S ribosomal protein L29</fullName>
    </alternativeName>
</protein>
<sequence length="65" mass="7435">MKTKDLREKSVEELKALLDEQQLNQFRLRMAKATGQLGKSHEVQVARKTIARIKTLLTEKQGNGQ</sequence>
<feature type="chain" id="PRO_1000121719" description="Large ribosomal subunit protein uL29">
    <location>
        <begin position="1"/>
        <end position="65"/>
    </location>
</feature>
<organism>
    <name type="scientific">Acinetobacter baumannii (strain SDF)</name>
    <dbReference type="NCBI Taxonomy" id="509170"/>
    <lineage>
        <taxon>Bacteria</taxon>
        <taxon>Pseudomonadati</taxon>
        <taxon>Pseudomonadota</taxon>
        <taxon>Gammaproteobacteria</taxon>
        <taxon>Moraxellales</taxon>
        <taxon>Moraxellaceae</taxon>
        <taxon>Acinetobacter</taxon>
        <taxon>Acinetobacter calcoaceticus/baumannii complex</taxon>
    </lineage>
</organism>